<proteinExistence type="inferred from homology"/>
<feature type="chain" id="PRO_0000409930" description="Cobyric acid synthase">
    <location>
        <begin position="1"/>
        <end position="481"/>
    </location>
</feature>
<feature type="domain" description="GATase cobBQ-type">
    <location>
        <begin position="248"/>
        <end position="435"/>
    </location>
</feature>
<feature type="active site" description="Nucleophile" evidence="1">
    <location>
        <position position="330"/>
    </location>
</feature>
<feature type="active site" evidence="1">
    <location>
        <position position="427"/>
    </location>
</feature>
<keyword id="KW-0169">Cobalamin biosynthesis</keyword>
<keyword id="KW-0315">Glutamine amidotransferase</keyword>
<keyword id="KW-1185">Reference proteome</keyword>
<name>COBQ_RHOCB</name>
<accession>D5AV13</accession>
<accession>O68093</accession>
<accession>Q52686</accession>
<reference key="1">
    <citation type="journal article" date="1997" name="Proc. Natl. Acad. Sci. U.S.A.">
        <title>Sequence of a 189-kb segment of the chromosome of Rhodobacter capsulatus SB1003.</title>
        <authorList>
            <person name="Vlcek C."/>
            <person name="Paces V."/>
            <person name="Maltsev N."/>
            <person name="Paces J."/>
            <person name="Haselkorn R."/>
            <person name="Fonstein M."/>
        </authorList>
    </citation>
    <scope>NUCLEOTIDE SEQUENCE [GENOMIC DNA]</scope>
    <source>
        <strain>ATCC BAA-309 / NBRC 16581 / SB1003</strain>
    </source>
</reference>
<reference key="2">
    <citation type="journal article" date="2010" name="J. Bacteriol.">
        <title>Complete genome sequence of the photosynthetic purple nonsulfur bacterium Rhodobacter capsulatus SB 1003.</title>
        <authorList>
            <person name="Strnad H."/>
            <person name="Lapidus A."/>
            <person name="Paces J."/>
            <person name="Ulbrich P."/>
            <person name="Vlcek C."/>
            <person name="Paces V."/>
            <person name="Haselkorn R."/>
        </authorList>
    </citation>
    <scope>NUCLEOTIDE SEQUENCE [LARGE SCALE GENOMIC DNA]</scope>
    <source>
        <strain>ATCC BAA-309 / NBRC 16581 / SB1003</strain>
    </source>
</reference>
<evidence type="ECO:0000250" key="1"/>
<evidence type="ECO:0000305" key="2"/>
<protein>
    <recommendedName>
        <fullName>Cobyric acid synthase</fullName>
    </recommendedName>
</protein>
<comment type="function">
    <text evidence="1">Catalyzes amidations at positions B, D, E, and G on adenosylcobyrinic A,C-diamide. NH(2) groups are provided by glutamine, and one molecule of ATP is hydrogenolyzed for each amidation (By similarity).</text>
</comment>
<comment type="pathway">
    <text>Cofactor biosynthesis; adenosylcobalamin biosynthesis.</text>
</comment>
<comment type="similarity">
    <text evidence="2">Belongs to the CobB/CobQ family. CobQ subfamily.</text>
</comment>
<dbReference type="EMBL" id="AF010496">
    <property type="protein sequence ID" value="AAC16180.1"/>
    <property type="molecule type" value="Genomic_DNA"/>
</dbReference>
<dbReference type="EMBL" id="CP001312">
    <property type="protein sequence ID" value="ADE85795.1"/>
    <property type="molecule type" value="Genomic_DNA"/>
</dbReference>
<dbReference type="PIR" id="T03527">
    <property type="entry name" value="T03527"/>
</dbReference>
<dbReference type="RefSeq" id="WP_013067774.1">
    <property type="nucleotide sequence ID" value="NC_014034.1"/>
</dbReference>
<dbReference type="SMR" id="D5AV13"/>
<dbReference type="STRING" id="272942.RCAP_rcc02051"/>
<dbReference type="GeneID" id="31490913"/>
<dbReference type="KEGG" id="rcp:RCAP_rcc02051"/>
<dbReference type="eggNOG" id="COG1492">
    <property type="taxonomic scope" value="Bacteria"/>
</dbReference>
<dbReference type="HOGENOM" id="CLU_019250_2_2_5"/>
<dbReference type="OrthoDB" id="9808302at2"/>
<dbReference type="UniPathway" id="UPA00148"/>
<dbReference type="Proteomes" id="UP000002361">
    <property type="component" value="Chromosome"/>
</dbReference>
<dbReference type="GO" id="GO:0015420">
    <property type="term" value="F:ABC-type vitamin B12 transporter activity"/>
    <property type="evidence" value="ECO:0007669"/>
    <property type="project" value="UniProtKB-UniRule"/>
</dbReference>
<dbReference type="GO" id="GO:0003824">
    <property type="term" value="F:catalytic activity"/>
    <property type="evidence" value="ECO:0007669"/>
    <property type="project" value="InterPro"/>
</dbReference>
<dbReference type="GO" id="GO:0009236">
    <property type="term" value="P:cobalamin biosynthetic process"/>
    <property type="evidence" value="ECO:0007669"/>
    <property type="project" value="UniProtKB-UniRule"/>
</dbReference>
<dbReference type="CDD" id="cd05389">
    <property type="entry name" value="CobQ_N"/>
    <property type="match status" value="1"/>
</dbReference>
<dbReference type="CDD" id="cd01750">
    <property type="entry name" value="GATase1_CobQ"/>
    <property type="match status" value="1"/>
</dbReference>
<dbReference type="Gene3D" id="3.40.50.880">
    <property type="match status" value="1"/>
</dbReference>
<dbReference type="Gene3D" id="3.40.50.300">
    <property type="entry name" value="P-loop containing nucleotide triphosphate hydrolases"/>
    <property type="match status" value="1"/>
</dbReference>
<dbReference type="HAMAP" id="MF_00028">
    <property type="entry name" value="CobQ"/>
    <property type="match status" value="1"/>
</dbReference>
<dbReference type="InterPro" id="IPR029062">
    <property type="entry name" value="Class_I_gatase-like"/>
</dbReference>
<dbReference type="InterPro" id="IPR002586">
    <property type="entry name" value="CobQ/CobB/MinD/ParA_Nub-bd_dom"/>
</dbReference>
<dbReference type="InterPro" id="IPR033949">
    <property type="entry name" value="CobQ_GATase1"/>
</dbReference>
<dbReference type="InterPro" id="IPR047045">
    <property type="entry name" value="CobQ_N"/>
</dbReference>
<dbReference type="InterPro" id="IPR004459">
    <property type="entry name" value="CobQ_synth"/>
</dbReference>
<dbReference type="InterPro" id="IPR011698">
    <property type="entry name" value="GATase_3"/>
</dbReference>
<dbReference type="InterPro" id="IPR027417">
    <property type="entry name" value="P-loop_NTPase"/>
</dbReference>
<dbReference type="NCBIfam" id="TIGR00313">
    <property type="entry name" value="cobQ"/>
    <property type="match status" value="1"/>
</dbReference>
<dbReference type="NCBIfam" id="NF001989">
    <property type="entry name" value="PRK00784.1"/>
    <property type="match status" value="1"/>
</dbReference>
<dbReference type="PANTHER" id="PTHR21343:SF1">
    <property type="entry name" value="COBYRIC ACID SYNTHASE"/>
    <property type="match status" value="1"/>
</dbReference>
<dbReference type="PANTHER" id="PTHR21343">
    <property type="entry name" value="DETHIOBIOTIN SYNTHETASE"/>
    <property type="match status" value="1"/>
</dbReference>
<dbReference type="Pfam" id="PF01656">
    <property type="entry name" value="CbiA"/>
    <property type="match status" value="1"/>
</dbReference>
<dbReference type="Pfam" id="PF07685">
    <property type="entry name" value="GATase_3"/>
    <property type="match status" value="1"/>
</dbReference>
<dbReference type="SUPFAM" id="SSF52317">
    <property type="entry name" value="Class I glutamine amidotransferase-like"/>
    <property type="match status" value="1"/>
</dbReference>
<dbReference type="SUPFAM" id="SSF52540">
    <property type="entry name" value="P-loop containing nucleoside triphosphate hydrolases"/>
    <property type="match status" value="1"/>
</dbReference>
<dbReference type="PROSITE" id="PS51274">
    <property type="entry name" value="GATASE_COBBQ"/>
    <property type="match status" value="1"/>
</dbReference>
<gene>
    <name type="primary">cobQ</name>
    <name type="ordered locus">RCAP_rcc02051</name>
</gene>
<sequence length="481" mass="50138">MTALMIQGAGSNVGKSMLVAGLCRAARRRGLTVAPFKPQNMSNNAAVTADGGEIGRAQALQALACGLEPVTDMNPILLKPESDVGAQVVVQGKRLTTTRARVYATLKPQLMGAVLESFNRLKATHDLVIVEGAGSPAEVNLRAGDIANMGFARAADVPVVLVGDIDRGGVIAQIVGTQAVLDPADAEMISGFLINKFRGDVTLFDDGYRLIGARTGWRGFGTLPWFPLAHKLPAEDALDIASGPATGGTVIACLTLSRIANFDDLDPLAAEPGVRMVMVQPGQPIPAEARLVILPGSKSTRGDLAFLREQGWDIDLAAHVRRGGHVLGICGGYQMLGRSVADPEGIEGPAGTTPGLGLLDVETVMTPDKRLTRVRATHAGSGLAVEGYEIHIGRTEGADRARPFAIVEGQNEGAMSADGRVIGSYLHGLFGADAFRAAFLRGLGIRASGQSHAAGVEAALDALADHLETHLDVTGILALAR</sequence>
<organism>
    <name type="scientific">Rhodobacter capsulatus (strain ATCC BAA-309 / NBRC 16581 / SB1003)</name>
    <dbReference type="NCBI Taxonomy" id="272942"/>
    <lineage>
        <taxon>Bacteria</taxon>
        <taxon>Pseudomonadati</taxon>
        <taxon>Pseudomonadota</taxon>
        <taxon>Alphaproteobacteria</taxon>
        <taxon>Rhodobacterales</taxon>
        <taxon>Rhodobacter group</taxon>
        <taxon>Rhodobacter</taxon>
    </lineage>
</organism>